<evidence type="ECO:0000255" key="1">
    <source>
        <dbReference type="PROSITE-ProRule" id="PRU00031"/>
    </source>
</evidence>
<evidence type="ECO:0000269" key="2">
    <source>
    </source>
</evidence>
<evidence type="ECO:0000303" key="3">
    <source>
    </source>
</evidence>
<evidence type="ECO:0000305" key="4"/>
<evidence type="ECO:0000305" key="5">
    <source>
    </source>
</evidence>
<accession>Q589G4</accession>
<keyword id="KW-0108">Calcium channel impairing toxin</keyword>
<keyword id="KW-0903">Direct protein sequencing</keyword>
<keyword id="KW-1015">Disulfide bond</keyword>
<keyword id="KW-0872">Ion channel impairing toxin</keyword>
<keyword id="KW-0528">Neurotoxin</keyword>
<keyword id="KW-0632">Potassium channel impairing toxin</keyword>
<keyword id="KW-0646">Protease inhibitor</keyword>
<keyword id="KW-0964">Secreted</keyword>
<keyword id="KW-0722">Serine protease inhibitor</keyword>
<keyword id="KW-0732">Signal</keyword>
<keyword id="KW-0800">Toxin</keyword>
<feature type="signal peptide" evidence="2">
    <location>
        <begin position="1"/>
        <end position="17"/>
    </location>
</feature>
<feature type="chain" id="PRO_0000223994" description="Kunitz-type serine protease inhibitor As-fr-19" evidence="2">
    <location>
        <begin position="18"/>
        <end position="75"/>
    </location>
</feature>
<feature type="domain" description="BPTI/Kunitz inhibitor" evidence="1">
    <location>
        <begin position="21"/>
        <end position="71"/>
    </location>
</feature>
<feature type="disulfide bond" evidence="1">
    <location>
        <begin position="21"/>
        <end position="71"/>
    </location>
</feature>
<feature type="disulfide bond" evidence="1">
    <location>
        <begin position="30"/>
        <end position="54"/>
    </location>
</feature>
<feature type="disulfide bond" evidence="1">
    <location>
        <begin position="46"/>
        <end position="67"/>
    </location>
</feature>
<reference key="1">
    <citation type="journal article" date="2005" name="Biochem. Biophys. Res. Commun.">
        <title>Molecular components and toxicity of the venom of the solitary wasp, Anoplius samariensis.</title>
        <authorList>
            <person name="Hisada M."/>
            <person name="Satake H."/>
            <person name="Masuda K."/>
            <person name="Aoyama M."/>
            <person name="Murata K."/>
            <person name="Shinada T."/>
            <person name="Iwashita T."/>
            <person name="Ohfune Y."/>
            <person name="Nakajima T."/>
        </authorList>
    </citation>
    <scope>NUCLEOTIDE SEQUENCE [MRNA]</scope>
    <scope>PROTEIN SEQUENCE OF 18-39</scope>
    <scope>MASS SPECTROMETRY</scope>
    <scope>SUBCELLULAR LOCATION</scope>
    <source>
        <tissue>Venom</tissue>
        <tissue>Venom gland</tissue>
    </source>
</reference>
<reference key="2">
    <citation type="journal article" date="2016" name="Toxins">
        <title>Peptide toxins in solitary wasp venoms.</title>
        <authorList>
            <person name="Konno K."/>
            <person name="Kazuma K."/>
            <person name="Nihei K."/>
        </authorList>
    </citation>
    <scope>REVIEW</scope>
</reference>
<name>VKT19_ANOSM</name>
<proteinExistence type="evidence at protein level"/>
<protein>
    <recommendedName>
        <fullName evidence="3">Kunitz-type serine protease inhibitor As-fr-19</fullName>
        <shortName evidence="3">Asfr19</shortName>
    </recommendedName>
</protein>
<organism>
    <name type="scientific">Anoplius samariensis</name>
    <name type="common">Solitary wasp</name>
    <dbReference type="NCBI Taxonomy" id="200614"/>
    <lineage>
        <taxon>Eukaryota</taxon>
        <taxon>Metazoa</taxon>
        <taxon>Ecdysozoa</taxon>
        <taxon>Arthropoda</taxon>
        <taxon>Hexapoda</taxon>
        <taxon>Insecta</taxon>
        <taxon>Pterygota</taxon>
        <taxon>Neoptera</taxon>
        <taxon>Endopterygota</taxon>
        <taxon>Hymenoptera</taxon>
        <taxon>Apocrita</taxon>
        <taxon>Aculeata</taxon>
        <taxon>Pompiloidea</taxon>
        <taxon>Pompilidae</taxon>
        <taxon>Pompilinae</taxon>
        <taxon>Anoplius</taxon>
    </lineage>
</organism>
<comment type="function">
    <text evidence="5">May exert inhibitory effects on serine proteases and on potassium and/or calcium channels and then participate in the long-term non-lethal paralysis on the prey.</text>
</comment>
<comment type="subcellular location">
    <subcellularLocation>
        <location evidence="2">Secreted</location>
    </subcellularLocation>
</comment>
<comment type="tissue specificity">
    <text evidence="5">Expressed by the venom gland.</text>
</comment>
<comment type="mass spectrometry"/>
<comment type="similarity">
    <text evidence="4">Belongs to the venom Kunitz-type family.</text>
</comment>
<sequence>MMLLVLSISAILQVSHSVSFCLLPIVPGPCTQYVIRYAFQPSISACRRFTFGGCEGNDNNFMTRRDCEHYCEELL</sequence>
<dbReference type="EMBL" id="AB186137">
    <property type="protein sequence ID" value="BAD93276.1"/>
    <property type="molecule type" value="mRNA"/>
</dbReference>
<dbReference type="SMR" id="Q589G4"/>
<dbReference type="MEROPS" id="I02.964"/>
<dbReference type="GO" id="GO:0005576">
    <property type="term" value="C:extracellular region"/>
    <property type="evidence" value="ECO:0007669"/>
    <property type="project" value="UniProtKB-SubCell"/>
</dbReference>
<dbReference type="GO" id="GO:0005246">
    <property type="term" value="F:calcium channel regulator activity"/>
    <property type="evidence" value="ECO:0007669"/>
    <property type="project" value="UniProtKB-KW"/>
</dbReference>
<dbReference type="GO" id="GO:0015459">
    <property type="term" value="F:potassium channel regulator activity"/>
    <property type="evidence" value="ECO:0007669"/>
    <property type="project" value="UniProtKB-KW"/>
</dbReference>
<dbReference type="GO" id="GO:0004867">
    <property type="term" value="F:serine-type endopeptidase inhibitor activity"/>
    <property type="evidence" value="ECO:0007669"/>
    <property type="project" value="UniProtKB-KW"/>
</dbReference>
<dbReference type="GO" id="GO:0090729">
    <property type="term" value="F:toxin activity"/>
    <property type="evidence" value="ECO:0007669"/>
    <property type="project" value="UniProtKB-KW"/>
</dbReference>
<dbReference type="CDD" id="cd00109">
    <property type="entry name" value="Kunitz-type"/>
    <property type="match status" value="1"/>
</dbReference>
<dbReference type="FunFam" id="4.10.410.10:FF:000020">
    <property type="entry name" value="Collagen, type VI, alpha 3"/>
    <property type="match status" value="1"/>
</dbReference>
<dbReference type="Gene3D" id="4.10.410.10">
    <property type="entry name" value="Pancreatic trypsin inhibitor Kunitz domain"/>
    <property type="match status" value="1"/>
</dbReference>
<dbReference type="InterPro" id="IPR002223">
    <property type="entry name" value="Kunitz_BPTI"/>
</dbReference>
<dbReference type="InterPro" id="IPR036880">
    <property type="entry name" value="Kunitz_BPTI_sf"/>
</dbReference>
<dbReference type="InterPro" id="IPR020901">
    <property type="entry name" value="Prtase_inh_Kunz-CS"/>
</dbReference>
<dbReference type="InterPro" id="IPR050098">
    <property type="entry name" value="TFPI/VKTCI-like"/>
</dbReference>
<dbReference type="PANTHER" id="PTHR10083">
    <property type="entry name" value="KUNITZ-TYPE PROTEASE INHIBITOR-RELATED"/>
    <property type="match status" value="1"/>
</dbReference>
<dbReference type="Pfam" id="PF00014">
    <property type="entry name" value="Kunitz_BPTI"/>
    <property type="match status" value="1"/>
</dbReference>
<dbReference type="PRINTS" id="PR00759">
    <property type="entry name" value="BASICPTASE"/>
</dbReference>
<dbReference type="SMART" id="SM00131">
    <property type="entry name" value="KU"/>
    <property type="match status" value="1"/>
</dbReference>
<dbReference type="SUPFAM" id="SSF57362">
    <property type="entry name" value="BPTI-like"/>
    <property type="match status" value="1"/>
</dbReference>
<dbReference type="PROSITE" id="PS00280">
    <property type="entry name" value="BPTI_KUNITZ_1"/>
    <property type="match status" value="1"/>
</dbReference>
<dbReference type="PROSITE" id="PS50279">
    <property type="entry name" value="BPTI_KUNITZ_2"/>
    <property type="match status" value="1"/>
</dbReference>